<gene>
    <name evidence="1" type="primary">proA</name>
    <name type="ordered locus">ECSE_0263</name>
</gene>
<reference key="1">
    <citation type="journal article" date="2008" name="DNA Res.">
        <title>Complete genome sequence and comparative analysis of the wild-type commensal Escherichia coli strain SE11 isolated from a healthy adult.</title>
        <authorList>
            <person name="Oshima K."/>
            <person name="Toh H."/>
            <person name="Ogura Y."/>
            <person name="Sasamoto H."/>
            <person name="Morita H."/>
            <person name="Park S.-H."/>
            <person name="Ooka T."/>
            <person name="Iyoda S."/>
            <person name="Taylor T.D."/>
            <person name="Hayashi T."/>
            <person name="Itoh K."/>
            <person name="Hattori M."/>
        </authorList>
    </citation>
    <scope>NUCLEOTIDE SEQUENCE [LARGE SCALE GENOMIC DNA]</scope>
    <source>
        <strain>SE11</strain>
    </source>
</reference>
<organism>
    <name type="scientific">Escherichia coli (strain SE11)</name>
    <dbReference type="NCBI Taxonomy" id="409438"/>
    <lineage>
        <taxon>Bacteria</taxon>
        <taxon>Pseudomonadati</taxon>
        <taxon>Pseudomonadota</taxon>
        <taxon>Gammaproteobacteria</taxon>
        <taxon>Enterobacterales</taxon>
        <taxon>Enterobacteriaceae</taxon>
        <taxon>Escherichia</taxon>
    </lineage>
</organism>
<protein>
    <recommendedName>
        <fullName evidence="1">Gamma-glutamyl phosphate reductase</fullName>
        <shortName evidence="1">GPR</shortName>
        <ecNumber evidence="1">1.2.1.41</ecNumber>
    </recommendedName>
    <alternativeName>
        <fullName evidence="1">Glutamate-5-semialdehyde dehydrogenase</fullName>
    </alternativeName>
    <alternativeName>
        <fullName evidence="1">Glutamyl-gamma-semialdehyde dehydrogenase</fullName>
        <shortName evidence="1">GSA dehydrogenase</shortName>
    </alternativeName>
</protein>
<feature type="chain" id="PRO_1000193604" description="Gamma-glutamyl phosphate reductase">
    <location>
        <begin position="1"/>
        <end position="417"/>
    </location>
</feature>
<sequence>MLEQMGIAAKQASYKLAQLSSREKNRVLEKIADELEAQSEIILNANAQDVADARANGLGEAMLDRLALTPARLKGIADDVRQVCNLADPVGQVIDGSVLDSGLRLERRRVPLGVIGVIYEARPNVTVDVASLCLKTGNAVILRGGKETCRTNAATVAVIQDALKSCGLPAGAVQAIDNPDRALVSEMLRMDKYIDMLIPRGGAGLHKLCREQSTIPVITGGIGVCHIYVDESVEIAEALKVIVNAKTQRPSTCNTVETLLVNKNIADSFLPALSKQMAESGVTLHADAAALAQLQAGPAKVVAVKAEEYDDEFLSLDLNVKIVSDLDDAIAHIREHGTQHSDAILTRDMRNAQRFVNEVDSSAVYVNASTRFTDGGQFGLGAEVAVSTQKLHARGPMGLEALTTYKWIGIGDYTIRA</sequence>
<accession>B6I023</accession>
<proteinExistence type="inferred from homology"/>
<dbReference type="EC" id="1.2.1.41" evidence="1"/>
<dbReference type="EMBL" id="AP009240">
    <property type="protein sequence ID" value="BAG75787.1"/>
    <property type="molecule type" value="Genomic_DNA"/>
</dbReference>
<dbReference type="RefSeq" id="WP_000893255.1">
    <property type="nucleotide sequence ID" value="NC_011415.1"/>
</dbReference>
<dbReference type="SMR" id="B6I023"/>
<dbReference type="GeneID" id="75205724"/>
<dbReference type="KEGG" id="ecy:ECSE_0263"/>
<dbReference type="HOGENOM" id="CLU_030231_0_0_6"/>
<dbReference type="UniPathway" id="UPA00098">
    <property type="reaction ID" value="UER00360"/>
</dbReference>
<dbReference type="Proteomes" id="UP000008199">
    <property type="component" value="Chromosome"/>
</dbReference>
<dbReference type="GO" id="GO:0005737">
    <property type="term" value="C:cytoplasm"/>
    <property type="evidence" value="ECO:0007669"/>
    <property type="project" value="UniProtKB-SubCell"/>
</dbReference>
<dbReference type="GO" id="GO:0004350">
    <property type="term" value="F:glutamate-5-semialdehyde dehydrogenase activity"/>
    <property type="evidence" value="ECO:0007669"/>
    <property type="project" value="UniProtKB-UniRule"/>
</dbReference>
<dbReference type="GO" id="GO:0050661">
    <property type="term" value="F:NADP binding"/>
    <property type="evidence" value="ECO:0007669"/>
    <property type="project" value="InterPro"/>
</dbReference>
<dbReference type="GO" id="GO:0055129">
    <property type="term" value="P:L-proline biosynthetic process"/>
    <property type="evidence" value="ECO:0007669"/>
    <property type="project" value="UniProtKB-UniRule"/>
</dbReference>
<dbReference type="CDD" id="cd07079">
    <property type="entry name" value="ALDH_F18-19_ProA-GPR"/>
    <property type="match status" value="1"/>
</dbReference>
<dbReference type="FunFam" id="3.40.309.10:FF:000006">
    <property type="entry name" value="Gamma-glutamyl phosphate reductase"/>
    <property type="match status" value="1"/>
</dbReference>
<dbReference type="Gene3D" id="3.40.605.10">
    <property type="entry name" value="Aldehyde Dehydrogenase, Chain A, domain 1"/>
    <property type="match status" value="1"/>
</dbReference>
<dbReference type="Gene3D" id="3.40.309.10">
    <property type="entry name" value="Aldehyde Dehydrogenase, Chain A, domain 2"/>
    <property type="match status" value="1"/>
</dbReference>
<dbReference type="HAMAP" id="MF_00412">
    <property type="entry name" value="ProA"/>
    <property type="match status" value="1"/>
</dbReference>
<dbReference type="InterPro" id="IPR016161">
    <property type="entry name" value="Ald_DH/histidinol_DH"/>
</dbReference>
<dbReference type="InterPro" id="IPR016163">
    <property type="entry name" value="Ald_DH_C"/>
</dbReference>
<dbReference type="InterPro" id="IPR016162">
    <property type="entry name" value="Ald_DH_N"/>
</dbReference>
<dbReference type="InterPro" id="IPR015590">
    <property type="entry name" value="Aldehyde_DH_dom"/>
</dbReference>
<dbReference type="InterPro" id="IPR020593">
    <property type="entry name" value="G-glutamylP_reductase_CS"/>
</dbReference>
<dbReference type="InterPro" id="IPR012134">
    <property type="entry name" value="Glu-5-SA_DH"/>
</dbReference>
<dbReference type="InterPro" id="IPR000965">
    <property type="entry name" value="GPR_dom"/>
</dbReference>
<dbReference type="NCBIfam" id="NF001221">
    <property type="entry name" value="PRK00197.1"/>
    <property type="match status" value="1"/>
</dbReference>
<dbReference type="NCBIfam" id="TIGR00407">
    <property type="entry name" value="proA"/>
    <property type="match status" value="1"/>
</dbReference>
<dbReference type="PANTHER" id="PTHR11063:SF8">
    <property type="entry name" value="DELTA-1-PYRROLINE-5-CARBOXYLATE SYNTHASE"/>
    <property type="match status" value="1"/>
</dbReference>
<dbReference type="PANTHER" id="PTHR11063">
    <property type="entry name" value="GLUTAMATE SEMIALDEHYDE DEHYDROGENASE"/>
    <property type="match status" value="1"/>
</dbReference>
<dbReference type="Pfam" id="PF00171">
    <property type="entry name" value="Aldedh"/>
    <property type="match status" value="1"/>
</dbReference>
<dbReference type="PIRSF" id="PIRSF000151">
    <property type="entry name" value="GPR"/>
    <property type="match status" value="1"/>
</dbReference>
<dbReference type="SUPFAM" id="SSF53720">
    <property type="entry name" value="ALDH-like"/>
    <property type="match status" value="1"/>
</dbReference>
<dbReference type="PROSITE" id="PS01223">
    <property type="entry name" value="PROA"/>
    <property type="match status" value="1"/>
</dbReference>
<comment type="function">
    <text evidence="1">Catalyzes the NADPH-dependent reduction of L-glutamate 5-phosphate into L-glutamate 5-semialdehyde and phosphate. The product spontaneously undergoes cyclization to form 1-pyrroline-5-carboxylate.</text>
</comment>
<comment type="catalytic activity">
    <reaction evidence="1">
        <text>L-glutamate 5-semialdehyde + phosphate + NADP(+) = L-glutamyl 5-phosphate + NADPH + H(+)</text>
        <dbReference type="Rhea" id="RHEA:19541"/>
        <dbReference type="ChEBI" id="CHEBI:15378"/>
        <dbReference type="ChEBI" id="CHEBI:43474"/>
        <dbReference type="ChEBI" id="CHEBI:57783"/>
        <dbReference type="ChEBI" id="CHEBI:58066"/>
        <dbReference type="ChEBI" id="CHEBI:58274"/>
        <dbReference type="ChEBI" id="CHEBI:58349"/>
        <dbReference type="EC" id="1.2.1.41"/>
    </reaction>
</comment>
<comment type="pathway">
    <text evidence="1">Amino-acid biosynthesis; L-proline biosynthesis; L-glutamate 5-semialdehyde from L-glutamate: step 2/2.</text>
</comment>
<comment type="subcellular location">
    <subcellularLocation>
        <location evidence="1">Cytoplasm</location>
    </subcellularLocation>
</comment>
<comment type="similarity">
    <text evidence="1">Belongs to the gamma-glutamyl phosphate reductase family.</text>
</comment>
<keyword id="KW-0028">Amino-acid biosynthesis</keyword>
<keyword id="KW-0963">Cytoplasm</keyword>
<keyword id="KW-0521">NADP</keyword>
<keyword id="KW-0560">Oxidoreductase</keyword>
<keyword id="KW-0641">Proline biosynthesis</keyword>
<name>PROA_ECOSE</name>
<evidence type="ECO:0000255" key="1">
    <source>
        <dbReference type="HAMAP-Rule" id="MF_00412"/>
    </source>
</evidence>